<sequence>MGLSPSIYKDVGDLSSLSTDVIIIGGGATGAGIARDCALRGIDCILLERRDIATGATGRNHGLLHSGARYAVNDQESAEECIKENRILRKIARHCVDETEGLFITLPEDSLDYQKTFLESCAKSGIDAQAIDPELAKIMEPSVNPDLVGAVVVPDGSIDPFRLTASNMMDATENGAKMFTYCEVKNLIREGGKVIGVNAYDHKNRRERQFFAPLVVNAGGIWGQGIAEYADLKIKMFPAKGALLVMGHRINKLVINRCRKPADADILVPGDTICVIGTTSSRIPYDQIDNMEVTPEEVDILFREGEKLAPSLRHTRVLRAYAGVRPLVASDDDPSGRNVSRGIVLLDHAERDGLDGFITITGGKLMTYRLMAEWATDLVCKKLNKTARCVTAEQPLPGSTESRQETNQKVISLPSTIRYSAVYRHGSRATRLLEKERLDRSMVCECEAVTAGEVRYAVDELDVNNLVDLRRRSRVGMGTCQAELCACRAAGLMNRFEVATPRQSTTQLSAFMEERWRGIEPIAWGEAIREAEFTSWMYASVLGLNDVKPLDEQAQQGTDSNEF</sequence>
<feature type="chain" id="PRO_0000126095" description="Anaerobic glycerol-3-phosphate dehydrogenase subunit A">
    <location>
        <begin position="1"/>
        <end position="563"/>
    </location>
</feature>
<feature type="binding site" evidence="2">
    <location>
        <begin position="20"/>
        <end position="48"/>
    </location>
    <ligand>
        <name>FAD</name>
        <dbReference type="ChEBI" id="CHEBI:57692"/>
    </ligand>
</feature>
<proteinExistence type="inferred from homology"/>
<gene>
    <name type="primary">glpA</name>
    <name type="ordered locus">HI_0685</name>
</gene>
<protein>
    <recommendedName>
        <fullName>Anaerobic glycerol-3-phosphate dehydrogenase subunit A</fullName>
        <shortName>G-3-P dehydrogenase</shortName>
        <ecNumber>1.1.5.3</ecNumber>
    </recommendedName>
</protein>
<comment type="catalytic activity">
    <reaction>
        <text>a quinone + sn-glycerol 3-phosphate = dihydroxyacetone phosphate + a quinol</text>
        <dbReference type="Rhea" id="RHEA:18977"/>
        <dbReference type="ChEBI" id="CHEBI:24646"/>
        <dbReference type="ChEBI" id="CHEBI:57597"/>
        <dbReference type="ChEBI" id="CHEBI:57642"/>
        <dbReference type="ChEBI" id="CHEBI:132124"/>
        <dbReference type="EC" id="1.1.5.3"/>
    </reaction>
</comment>
<comment type="cofactor">
    <cofactor evidence="1">
        <name>FAD</name>
        <dbReference type="ChEBI" id="CHEBI:57692"/>
    </cofactor>
</comment>
<comment type="cofactor">
    <cofactor evidence="1">
        <name>FMN</name>
        <dbReference type="ChEBI" id="CHEBI:58210"/>
    </cofactor>
</comment>
<comment type="pathway">
    <text>Polyol metabolism; glycerol degradation via glycerol kinase pathway; glycerone phosphate from sn-glycerol 3-phosphate (anaerobic route): step 1/1.</text>
</comment>
<comment type="subunit">
    <text evidence="1">Composed of a catalytic GlpA/B dimer and of membrane bound GlpC.</text>
</comment>
<comment type="subcellular location">
    <subcellularLocation>
        <location evidence="1">Cell inner membrane</location>
        <topology evidence="1">Peripheral membrane protein</topology>
    </subcellularLocation>
    <text evidence="1">Loosely bound to the cytoplasmic membrane often occurring in vesicles associated with fumarate reductase.</text>
</comment>
<comment type="similarity">
    <text evidence="3">Belongs to the FAD-dependent glycerol-3-phosphate dehydrogenase family.</text>
</comment>
<evidence type="ECO:0000250" key="1"/>
<evidence type="ECO:0000255" key="2"/>
<evidence type="ECO:0000305" key="3"/>
<keyword id="KW-0997">Cell inner membrane</keyword>
<keyword id="KW-1003">Cell membrane</keyword>
<keyword id="KW-0274">FAD</keyword>
<keyword id="KW-0285">Flavoprotein</keyword>
<keyword id="KW-0472">Membrane</keyword>
<keyword id="KW-0560">Oxidoreductase</keyword>
<keyword id="KW-1185">Reference proteome</keyword>
<name>GLPA_HAEIN</name>
<accession>P43799</accession>
<dbReference type="EC" id="1.1.5.3"/>
<dbReference type="EMBL" id="L42023">
    <property type="protein sequence ID" value="AAC22345.1"/>
    <property type="molecule type" value="Genomic_DNA"/>
</dbReference>
<dbReference type="PIR" id="E64086">
    <property type="entry name" value="E64086"/>
</dbReference>
<dbReference type="RefSeq" id="NP_438845.1">
    <property type="nucleotide sequence ID" value="NC_000907.1"/>
</dbReference>
<dbReference type="SMR" id="P43799"/>
<dbReference type="STRING" id="71421.HI_0685"/>
<dbReference type="EnsemblBacteria" id="AAC22345">
    <property type="protein sequence ID" value="AAC22345"/>
    <property type="gene ID" value="HI_0685"/>
</dbReference>
<dbReference type="KEGG" id="hin:HI_0685"/>
<dbReference type="PATRIC" id="fig|71421.8.peg.716"/>
<dbReference type="eggNOG" id="COG0578">
    <property type="taxonomic scope" value="Bacteria"/>
</dbReference>
<dbReference type="HOGENOM" id="CLU_015740_0_1_6"/>
<dbReference type="OrthoDB" id="9801699at2"/>
<dbReference type="PhylomeDB" id="P43799"/>
<dbReference type="BioCyc" id="HINF71421:G1GJ1-720-MONOMER"/>
<dbReference type="UniPathway" id="UPA00618">
    <property type="reaction ID" value="UER00673"/>
</dbReference>
<dbReference type="Proteomes" id="UP000000579">
    <property type="component" value="Chromosome"/>
</dbReference>
<dbReference type="GO" id="GO:0009331">
    <property type="term" value="C:glycerol-3-phosphate dehydrogenase (FAD) complex"/>
    <property type="evidence" value="ECO:0007669"/>
    <property type="project" value="InterPro"/>
</dbReference>
<dbReference type="GO" id="GO:0005886">
    <property type="term" value="C:plasma membrane"/>
    <property type="evidence" value="ECO:0007669"/>
    <property type="project" value="UniProtKB-SubCell"/>
</dbReference>
<dbReference type="GO" id="GO:0050660">
    <property type="term" value="F:flavin adenine dinucleotide binding"/>
    <property type="evidence" value="ECO:0007669"/>
    <property type="project" value="InterPro"/>
</dbReference>
<dbReference type="GO" id="GO:0010181">
    <property type="term" value="F:FMN binding"/>
    <property type="evidence" value="ECO:0007669"/>
    <property type="project" value="InterPro"/>
</dbReference>
<dbReference type="GO" id="GO:0004368">
    <property type="term" value="F:glycerol-3-phosphate dehydrogenase (quinone) activity"/>
    <property type="evidence" value="ECO:0000318"/>
    <property type="project" value="GO_Central"/>
</dbReference>
<dbReference type="GO" id="GO:0019563">
    <property type="term" value="P:glycerol catabolic process"/>
    <property type="evidence" value="ECO:0007669"/>
    <property type="project" value="UniProtKB-UniPathway"/>
</dbReference>
<dbReference type="GO" id="GO:0046168">
    <property type="term" value="P:glycerol-3-phosphate catabolic process"/>
    <property type="evidence" value="ECO:0000318"/>
    <property type="project" value="GO_Central"/>
</dbReference>
<dbReference type="CDD" id="cd19946">
    <property type="entry name" value="GlpA-like_Fer2_BFD-like"/>
    <property type="match status" value="1"/>
</dbReference>
<dbReference type="FunFam" id="1.10.10.1100:FF:000003">
    <property type="entry name" value="Glycerol-3-phosphate dehydrogenase"/>
    <property type="match status" value="1"/>
</dbReference>
<dbReference type="FunFam" id="3.50.50.60:FF:000096">
    <property type="entry name" value="Glycerol-3-phosphate dehydrogenase"/>
    <property type="match status" value="1"/>
</dbReference>
<dbReference type="FunFam" id="3.50.50.60:FF:000102">
    <property type="entry name" value="Glycerol-3-phosphate dehydrogenase"/>
    <property type="match status" value="1"/>
</dbReference>
<dbReference type="Gene3D" id="1.10.10.1100">
    <property type="entry name" value="BFD-like [2Fe-2S]-binding domain"/>
    <property type="match status" value="1"/>
</dbReference>
<dbReference type="Gene3D" id="3.50.50.60">
    <property type="entry name" value="FAD/NAD(P)-binding domain"/>
    <property type="match status" value="3"/>
</dbReference>
<dbReference type="InterPro" id="IPR007419">
    <property type="entry name" value="BFD-like_2Fe2S-bd_dom"/>
</dbReference>
<dbReference type="InterPro" id="IPR041854">
    <property type="entry name" value="BFD-like_2Fe2S-bd_dom_sf"/>
</dbReference>
<dbReference type="InterPro" id="IPR006076">
    <property type="entry name" value="FAD-dep_OxRdtase"/>
</dbReference>
<dbReference type="InterPro" id="IPR036188">
    <property type="entry name" value="FAD/NAD-bd_sf"/>
</dbReference>
<dbReference type="InterPro" id="IPR000447">
    <property type="entry name" value="G3P_DH_FAD-dep"/>
</dbReference>
<dbReference type="InterPro" id="IPR017752">
    <property type="entry name" value="G3P_DH_GlpA_su"/>
</dbReference>
<dbReference type="NCBIfam" id="TIGR03377">
    <property type="entry name" value="glycerol3P_GlpA"/>
    <property type="match status" value="1"/>
</dbReference>
<dbReference type="NCBIfam" id="NF008313">
    <property type="entry name" value="PRK11101.1"/>
    <property type="match status" value="1"/>
</dbReference>
<dbReference type="PANTHER" id="PTHR11985:SF35">
    <property type="entry name" value="ANAEROBIC GLYCEROL-3-PHOSPHATE DEHYDROGENASE SUBUNIT A"/>
    <property type="match status" value="1"/>
</dbReference>
<dbReference type="PANTHER" id="PTHR11985">
    <property type="entry name" value="GLYCEROL-3-PHOSPHATE DEHYDROGENASE"/>
    <property type="match status" value="1"/>
</dbReference>
<dbReference type="Pfam" id="PF01266">
    <property type="entry name" value="DAO"/>
    <property type="match status" value="1"/>
</dbReference>
<dbReference type="Pfam" id="PF04324">
    <property type="entry name" value="Fer2_BFD"/>
    <property type="match status" value="1"/>
</dbReference>
<dbReference type="PRINTS" id="PR01001">
    <property type="entry name" value="FADG3PDH"/>
</dbReference>
<dbReference type="SUPFAM" id="SSF54373">
    <property type="entry name" value="FAD-linked reductases, C-terminal domain"/>
    <property type="match status" value="1"/>
</dbReference>
<dbReference type="SUPFAM" id="SSF51905">
    <property type="entry name" value="FAD/NAD(P)-binding domain"/>
    <property type="match status" value="1"/>
</dbReference>
<dbReference type="PROSITE" id="PS00977">
    <property type="entry name" value="FAD_G3PDH_1"/>
    <property type="match status" value="1"/>
</dbReference>
<dbReference type="PROSITE" id="PS00978">
    <property type="entry name" value="FAD_G3PDH_2"/>
    <property type="match status" value="1"/>
</dbReference>
<reference key="1">
    <citation type="journal article" date="1995" name="Science">
        <title>Whole-genome random sequencing and assembly of Haemophilus influenzae Rd.</title>
        <authorList>
            <person name="Fleischmann R.D."/>
            <person name="Adams M.D."/>
            <person name="White O."/>
            <person name="Clayton R.A."/>
            <person name="Kirkness E.F."/>
            <person name="Kerlavage A.R."/>
            <person name="Bult C.J."/>
            <person name="Tomb J.-F."/>
            <person name="Dougherty B.A."/>
            <person name="Merrick J.M."/>
            <person name="McKenney K."/>
            <person name="Sutton G.G."/>
            <person name="FitzHugh W."/>
            <person name="Fields C.A."/>
            <person name="Gocayne J.D."/>
            <person name="Scott J.D."/>
            <person name="Shirley R."/>
            <person name="Liu L.-I."/>
            <person name="Glodek A."/>
            <person name="Kelley J.M."/>
            <person name="Weidman J.F."/>
            <person name="Phillips C.A."/>
            <person name="Spriggs T."/>
            <person name="Hedblom E."/>
            <person name="Cotton M.D."/>
            <person name="Utterback T.R."/>
            <person name="Hanna M.C."/>
            <person name="Nguyen D.T."/>
            <person name="Saudek D.M."/>
            <person name="Brandon R.C."/>
            <person name="Fine L.D."/>
            <person name="Fritchman J.L."/>
            <person name="Fuhrmann J.L."/>
            <person name="Geoghagen N.S.M."/>
            <person name="Gnehm C.L."/>
            <person name="McDonald L.A."/>
            <person name="Small K.V."/>
            <person name="Fraser C.M."/>
            <person name="Smith H.O."/>
            <person name="Venter J.C."/>
        </authorList>
    </citation>
    <scope>NUCLEOTIDE SEQUENCE [LARGE SCALE GENOMIC DNA]</scope>
    <source>
        <strain>ATCC 51907 / DSM 11121 / KW20 / Rd</strain>
    </source>
</reference>
<organism>
    <name type="scientific">Haemophilus influenzae (strain ATCC 51907 / DSM 11121 / KW20 / Rd)</name>
    <dbReference type="NCBI Taxonomy" id="71421"/>
    <lineage>
        <taxon>Bacteria</taxon>
        <taxon>Pseudomonadati</taxon>
        <taxon>Pseudomonadota</taxon>
        <taxon>Gammaproteobacteria</taxon>
        <taxon>Pasteurellales</taxon>
        <taxon>Pasteurellaceae</taxon>
        <taxon>Haemophilus</taxon>
    </lineage>
</organism>